<proteinExistence type="inferred from homology"/>
<comment type="function">
    <text evidence="3 4">Transcription factor which regulates nonfermentable carbon utilization. Activator of gluconeogenetic genes like acuF, acuG and acuN.</text>
</comment>
<comment type="subcellular location">
    <subcellularLocation>
        <location evidence="1">Nucleus</location>
    </subcellularLocation>
</comment>
<comment type="similarity">
    <text evidence="5">Belongs to the ERT1/acuK family.</text>
</comment>
<gene>
    <name type="primary">acuK</name>
    <name type="ORF">AN7468</name>
</gene>
<reference key="1">
    <citation type="journal article" date="2007" name="Genetics">
        <title>Transcriptional control of gluconeogenesis in Aspergillus nidulans.</title>
        <authorList>
            <person name="Hynes M.J."/>
            <person name="Szewczyk E."/>
            <person name="Murray S.L."/>
            <person name="Suzuki Y."/>
            <person name="Davis M.A."/>
            <person name="Sealy-Lewis H.M."/>
        </authorList>
    </citation>
    <scope>NUCLEOTIDE SEQUENCE [GENOMIC DNA]</scope>
    <scope>FUNCTION</scope>
</reference>
<reference key="2">
    <citation type="journal article" date="2005" name="Nature">
        <title>Sequencing of Aspergillus nidulans and comparative analysis with A. fumigatus and A. oryzae.</title>
        <authorList>
            <person name="Galagan J.E."/>
            <person name="Calvo S.E."/>
            <person name="Cuomo C."/>
            <person name="Ma L.-J."/>
            <person name="Wortman J.R."/>
            <person name="Batzoglou S."/>
            <person name="Lee S.-I."/>
            <person name="Bastuerkmen M."/>
            <person name="Spevak C.C."/>
            <person name="Clutterbuck J."/>
            <person name="Kapitonov V."/>
            <person name="Jurka J."/>
            <person name="Scazzocchio C."/>
            <person name="Farman M.L."/>
            <person name="Butler J."/>
            <person name="Purcell S."/>
            <person name="Harris S."/>
            <person name="Braus G.H."/>
            <person name="Draht O."/>
            <person name="Busch S."/>
            <person name="D'Enfert C."/>
            <person name="Bouchier C."/>
            <person name="Goldman G.H."/>
            <person name="Bell-Pedersen D."/>
            <person name="Griffiths-Jones S."/>
            <person name="Doonan J.H."/>
            <person name="Yu J."/>
            <person name="Vienken K."/>
            <person name="Pain A."/>
            <person name="Freitag M."/>
            <person name="Selker E.U."/>
            <person name="Archer D.B."/>
            <person name="Penalva M.A."/>
            <person name="Oakley B.R."/>
            <person name="Momany M."/>
            <person name="Tanaka T."/>
            <person name="Kumagai T."/>
            <person name="Asai K."/>
            <person name="Machida M."/>
            <person name="Nierman W.C."/>
            <person name="Denning D.W."/>
            <person name="Caddick M.X."/>
            <person name="Hynes M."/>
            <person name="Paoletti M."/>
            <person name="Fischer R."/>
            <person name="Miller B.L."/>
            <person name="Dyer P.S."/>
            <person name="Sachs M.S."/>
            <person name="Osmani S.A."/>
            <person name="Birren B.W."/>
        </authorList>
    </citation>
    <scope>NUCLEOTIDE SEQUENCE [LARGE SCALE GENOMIC DNA]</scope>
    <source>
        <strain>FGSC A4 / ATCC 38163 / CBS 112.46 / NRRL 194 / M139</strain>
    </source>
</reference>
<reference key="3">
    <citation type="journal article" date="2009" name="Fungal Genet. Biol.">
        <title>The 2008 update of the Aspergillus nidulans genome annotation: a community effort.</title>
        <authorList>
            <person name="Wortman J.R."/>
            <person name="Gilsenan J.M."/>
            <person name="Joardar V."/>
            <person name="Deegan J."/>
            <person name="Clutterbuck J."/>
            <person name="Andersen M.R."/>
            <person name="Archer D."/>
            <person name="Bencina M."/>
            <person name="Braus G."/>
            <person name="Coutinho P."/>
            <person name="von Dohren H."/>
            <person name="Doonan J."/>
            <person name="Driessen A.J."/>
            <person name="Durek P."/>
            <person name="Espeso E."/>
            <person name="Fekete E."/>
            <person name="Flipphi M."/>
            <person name="Estrada C.G."/>
            <person name="Geysens S."/>
            <person name="Goldman G."/>
            <person name="de Groot P.W."/>
            <person name="Hansen K."/>
            <person name="Harris S.D."/>
            <person name="Heinekamp T."/>
            <person name="Helmstaedt K."/>
            <person name="Henrissat B."/>
            <person name="Hofmann G."/>
            <person name="Homan T."/>
            <person name="Horio T."/>
            <person name="Horiuchi H."/>
            <person name="James S."/>
            <person name="Jones M."/>
            <person name="Karaffa L."/>
            <person name="Karanyi Z."/>
            <person name="Kato M."/>
            <person name="Keller N."/>
            <person name="Kelly D.E."/>
            <person name="Kiel J.A."/>
            <person name="Kim J.M."/>
            <person name="van der Klei I.J."/>
            <person name="Klis F.M."/>
            <person name="Kovalchuk A."/>
            <person name="Krasevec N."/>
            <person name="Kubicek C.P."/>
            <person name="Liu B."/>
            <person name="Maccabe A."/>
            <person name="Meyer V."/>
            <person name="Mirabito P."/>
            <person name="Miskei M."/>
            <person name="Mos M."/>
            <person name="Mullins J."/>
            <person name="Nelson D.R."/>
            <person name="Nielsen J."/>
            <person name="Oakley B.R."/>
            <person name="Osmani S.A."/>
            <person name="Pakula T."/>
            <person name="Paszewski A."/>
            <person name="Paulsen I."/>
            <person name="Pilsyk S."/>
            <person name="Pocsi I."/>
            <person name="Punt P.J."/>
            <person name="Ram A.F."/>
            <person name="Ren Q."/>
            <person name="Robellet X."/>
            <person name="Robson G."/>
            <person name="Seiboth B."/>
            <person name="van Solingen P."/>
            <person name="Specht T."/>
            <person name="Sun J."/>
            <person name="Taheri-Talesh N."/>
            <person name="Takeshita N."/>
            <person name="Ussery D."/>
            <person name="vanKuyk P.A."/>
            <person name="Visser H."/>
            <person name="van de Vondervoort P.J."/>
            <person name="de Vries R.P."/>
            <person name="Walton J."/>
            <person name="Xiang X."/>
            <person name="Xiong Y."/>
            <person name="Zeng A.P."/>
            <person name="Brandt B.W."/>
            <person name="Cornell M.J."/>
            <person name="van den Hondel C.A."/>
            <person name="Visser J."/>
            <person name="Oliver S.G."/>
            <person name="Turner G."/>
        </authorList>
    </citation>
    <scope>GENOME REANNOTATION</scope>
    <source>
        <strain>FGSC A4 / ATCC 38163 / CBS 112.46 / NRRL 194 / M139</strain>
    </source>
</reference>
<reference key="4">
    <citation type="journal article" date="1976" name="J. Gen. Microbiol.">
        <title>Analysis of acetate non-utilizing (acu) mutants in Aspergillus nidulans.</title>
        <authorList>
            <person name="Armitt S."/>
            <person name="McCullough W."/>
            <person name="Roberts C.F."/>
        </authorList>
    </citation>
    <scope>FUNCTION</scope>
</reference>
<protein>
    <recommendedName>
        <fullName>Transcription activator of gluconeogenesis acuK</fullName>
    </recommendedName>
    <alternativeName>
        <fullName>Acetate non-utilizing mutant protein K</fullName>
    </alternativeName>
</protein>
<feature type="chain" id="PRO_0000406439" description="Transcription activator of gluconeogenesis acuK">
    <location>
        <begin position="1"/>
        <end position="702"/>
    </location>
</feature>
<feature type="DNA-binding region" description="Zn(2)-C6 fungal-type" evidence="1">
    <location>
        <begin position="73"/>
        <end position="101"/>
    </location>
</feature>
<feature type="region of interest" description="Disordered" evidence="2">
    <location>
        <begin position="1"/>
        <end position="66"/>
    </location>
</feature>
<feature type="region of interest" description="Disordered" evidence="2">
    <location>
        <begin position="159"/>
        <end position="246"/>
    </location>
</feature>
<feature type="region of interest" description="Disordered" evidence="2">
    <location>
        <begin position="281"/>
        <end position="320"/>
    </location>
</feature>
<feature type="region of interest" description="Disordered" evidence="2">
    <location>
        <begin position="565"/>
        <end position="586"/>
    </location>
</feature>
<feature type="compositionally biased region" description="Polar residues" evidence="2">
    <location>
        <begin position="34"/>
        <end position="55"/>
    </location>
</feature>
<feature type="compositionally biased region" description="Polar residues" evidence="2">
    <location>
        <begin position="165"/>
        <end position="200"/>
    </location>
</feature>
<feature type="compositionally biased region" description="Low complexity" evidence="2">
    <location>
        <begin position="201"/>
        <end position="217"/>
    </location>
</feature>
<feature type="compositionally biased region" description="Polar residues" evidence="2">
    <location>
        <begin position="218"/>
        <end position="240"/>
    </location>
</feature>
<feature type="compositionally biased region" description="Polar residues" evidence="2">
    <location>
        <begin position="297"/>
        <end position="320"/>
    </location>
</feature>
<feature type="compositionally biased region" description="Polar residues" evidence="2">
    <location>
        <begin position="565"/>
        <end position="585"/>
    </location>
</feature>
<evidence type="ECO:0000255" key="1">
    <source>
        <dbReference type="PROSITE-ProRule" id="PRU00227"/>
    </source>
</evidence>
<evidence type="ECO:0000256" key="2">
    <source>
        <dbReference type="SAM" id="MobiDB-lite"/>
    </source>
</evidence>
<evidence type="ECO:0000269" key="3">
    <source>
    </source>
</evidence>
<evidence type="ECO:0000269" key="4">
    <source>
    </source>
</evidence>
<evidence type="ECO:0000305" key="5"/>
<organism>
    <name type="scientific">Emericella nidulans (strain FGSC A4 / ATCC 38163 / CBS 112.46 / NRRL 194 / M139)</name>
    <name type="common">Aspergillus nidulans</name>
    <dbReference type="NCBI Taxonomy" id="227321"/>
    <lineage>
        <taxon>Eukaryota</taxon>
        <taxon>Fungi</taxon>
        <taxon>Dikarya</taxon>
        <taxon>Ascomycota</taxon>
        <taxon>Pezizomycotina</taxon>
        <taxon>Eurotiomycetes</taxon>
        <taxon>Eurotiomycetidae</taxon>
        <taxon>Eurotiales</taxon>
        <taxon>Aspergillaceae</taxon>
        <taxon>Aspergillus</taxon>
        <taxon>Aspergillus subgen. Nidulantes</taxon>
    </lineage>
</organism>
<name>ACUK_EMENI</name>
<dbReference type="EMBL" id="AY255811">
    <property type="protein sequence ID" value="AAQ83291.1"/>
    <property type="molecule type" value="Genomic_DNA"/>
</dbReference>
<dbReference type="EMBL" id="AACD01000129">
    <property type="protein sequence ID" value="EAA62048.1"/>
    <property type="molecule type" value="Genomic_DNA"/>
</dbReference>
<dbReference type="EMBL" id="BN001304">
    <property type="protein sequence ID" value="CBF79440.1"/>
    <property type="molecule type" value="Genomic_DNA"/>
</dbReference>
<dbReference type="RefSeq" id="XP_680737.1">
    <property type="nucleotide sequence ID" value="XM_675645.1"/>
</dbReference>
<dbReference type="SMR" id="Q5AW62"/>
<dbReference type="FunCoup" id="Q5AW62">
    <property type="interactions" value="223"/>
</dbReference>
<dbReference type="STRING" id="227321.Q5AW62"/>
<dbReference type="EnsemblFungi" id="CBF79440">
    <property type="protein sequence ID" value="CBF79440"/>
    <property type="gene ID" value="ANIA_07468"/>
</dbReference>
<dbReference type="KEGG" id="ani:ANIA_07468"/>
<dbReference type="eggNOG" id="ENOG502R1M5">
    <property type="taxonomic scope" value="Eukaryota"/>
</dbReference>
<dbReference type="HOGENOM" id="CLU_010748_1_0_1"/>
<dbReference type="InParanoid" id="Q5AW62"/>
<dbReference type="OMA" id="VMTTCKL"/>
<dbReference type="OrthoDB" id="2538135at2759"/>
<dbReference type="Proteomes" id="UP000000560">
    <property type="component" value="Chromosome IV"/>
</dbReference>
<dbReference type="GO" id="GO:0005634">
    <property type="term" value="C:nucleus"/>
    <property type="evidence" value="ECO:0000318"/>
    <property type="project" value="GO_Central"/>
</dbReference>
<dbReference type="GO" id="GO:0003700">
    <property type="term" value="F:DNA-binding transcription factor activity"/>
    <property type="evidence" value="ECO:0000318"/>
    <property type="project" value="GO_Central"/>
</dbReference>
<dbReference type="GO" id="GO:0000981">
    <property type="term" value="F:DNA-binding transcription factor activity, RNA polymerase II-specific"/>
    <property type="evidence" value="ECO:0007669"/>
    <property type="project" value="InterPro"/>
</dbReference>
<dbReference type="GO" id="GO:0000977">
    <property type="term" value="F:RNA polymerase II transcription regulatory region sequence-specific DNA binding"/>
    <property type="evidence" value="ECO:0000318"/>
    <property type="project" value="GO_Central"/>
</dbReference>
<dbReference type="GO" id="GO:0008270">
    <property type="term" value="F:zinc ion binding"/>
    <property type="evidence" value="ECO:0007669"/>
    <property type="project" value="InterPro"/>
</dbReference>
<dbReference type="GO" id="GO:0009267">
    <property type="term" value="P:cellular response to starvation"/>
    <property type="evidence" value="ECO:0000318"/>
    <property type="project" value="GO_Central"/>
</dbReference>
<dbReference type="GO" id="GO:0006094">
    <property type="term" value="P:gluconeogenesis"/>
    <property type="evidence" value="ECO:0007669"/>
    <property type="project" value="UniProtKB-KW"/>
</dbReference>
<dbReference type="CDD" id="cd00067">
    <property type="entry name" value="GAL4"/>
    <property type="match status" value="1"/>
</dbReference>
<dbReference type="Gene3D" id="4.10.240.10">
    <property type="entry name" value="Zn(2)-C6 fungal-type DNA-binding domain"/>
    <property type="match status" value="1"/>
</dbReference>
<dbReference type="InterPro" id="IPR050335">
    <property type="entry name" value="ERT1_acuK_gluconeogen_tf"/>
</dbReference>
<dbReference type="InterPro" id="IPR056751">
    <property type="entry name" value="PAS_13"/>
</dbReference>
<dbReference type="InterPro" id="IPR036864">
    <property type="entry name" value="Zn2-C6_fun-type_DNA-bd_sf"/>
</dbReference>
<dbReference type="InterPro" id="IPR001138">
    <property type="entry name" value="Zn2Cys6_DnaBD"/>
</dbReference>
<dbReference type="PANTHER" id="PTHR47659:SF1">
    <property type="entry name" value="TRANSCRIPTION ACTIVATOR OF GLUCONEOGENESIS ERT1"/>
    <property type="match status" value="1"/>
</dbReference>
<dbReference type="PANTHER" id="PTHR47659">
    <property type="entry name" value="ZN(II)2CYS6 TRANSCRIPTION FACTOR (EUROFUNG)-RELATED"/>
    <property type="match status" value="1"/>
</dbReference>
<dbReference type="Pfam" id="PF24990">
    <property type="entry name" value="PAS_13"/>
    <property type="match status" value="1"/>
</dbReference>
<dbReference type="SMART" id="SM00066">
    <property type="entry name" value="GAL4"/>
    <property type="match status" value="1"/>
</dbReference>
<dbReference type="SUPFAM" id="SSF57701">
    <property type="entry name" value="Zn2/Cys6 DNA-binding domain"/>
    <property type="match status" value="1"/>
</dbReference>
<dbReference type="PROSITE" id="PS50048">
    <property type="entry name" value="ZN2_CY6_FUNGAL_2"/>
    <property type="match status" value="1"/>
</dbReference>
<keyword id="KW-0238">DNA-binding</keyword>
<keyword id="KW-0312">Gluconeogenesis</keyword>
<keyword id="KW-0479">Metal-binding</keyword>
<keyword id="KW-0539">Nucleus</keyword>
<keyword id="KW-1185">Reference proteome</keyword>
<keyword id="KW-0804">Transcription</keyword>
<keyword id="KW-0805">Transcription regulation</keyword>
<keyword id="KW-0862">Zinc</keyword>
<accession>Q5AW62</accession>
<accession>C8VBE4</accession>
<accession>Q1XD65</accession>
<sequence length="702" mass="75909">METETGKGATAPPAESSGVEQDTAAVGAPADQPPKTNANATSNANGEDQPANGQKANPKDPSRPRRKKARRACFACQRAHLTCGDERPCQRCIKRGLQDACHDGVRKKAKYLHDAPDGALMPGIGGNNFYNNNSMSNGVPSGGINMNGANTVNSAASTQNSSANFYPTPQSNYSLYQENPINHQNSFPSQSPVSPTFSLKTNPTPRNTAPNNNNNNALTSSMPQPATTGVSNAPNQSQNPFAGPFFDPSDPALFNFDLSSMNFENRYGALEFGMLGHMATGAGDSPDSGTHRGSMGRSGSTQFASTPIGGTTTFGESPQNQQPFMFGDPLLNEWPSGQTSGQPHVNVGVYPQSSQGNVIPGHLSKPDAPHAFAIESGPNNFTSPGAATSPQINSGGYEDANAFNNVVTKSNGLSVNGQQRPPTISTPSLKHQSLQMNKRRHRNPSAVYESVKEPYAYTSRFHSLTAFIQRRFSPQKTLQIAKALASIRPSFIATTKTLNRDDLIFMEKCFQRTLWEYEDFINACGTPTIVCRRTGEVAAVGKEFSILTGWKKEVLLGKEPNYNVNTGGSSAANSRNITPRSSVESTGRPHPVFLAELLDDDSVVEFYEDFARLAFGDSRGSVTTRCKLLKYKTKEDMEAAQSDDNGQRWNNHLRKGGIANEAGMNQLGFKDGKVECAYCWTVKRDVFDIPMLIVMNVRLPLP</sequence>